<gene>
    <name evidence="1" type="primary">yidE</name>
    <name type="ordered locus">ECDH10B_3871</name>
</gene>
<proteinExistence type="inferred from homology"/>
<comment type="subcellular location">
    <subcellularLocation>
        <location evidence="1">Cell membrane</location>
        <topology evidence="1">Multi-pass membrane protein</topology>
    </subcellularLocation>
</comment>
<comment type="similarity">
    <text evidence="1">Belongs to the AAE transporter (TC 2.A.81) family. YidE subfamily.</text>
</comment>
<protein>
    <recommendedName>
        <fullName evidence="1">Putative transport protein YidE</fullName>
    </recommendedName>
</protein>
<evidence type="ECO:0000255" key="1">
    <source>
        <dbReference type="HAMAP-Rule" id="MF_01016"/>
    </source>
</evidence>
<organism>
    <name type="scientific">Escherichia coli (strain K12 / DH10B)</name>
    <dbReference type="NCBI Taxonomy" id="316385"/>
    <lineage>
        <taxon>Bacteria</taxon>
        <taxon>Pseudomonadati</taxon>
        <taxon>Pseudomonadota</taxon>
        <taxon>Gammaproteobacteria</taxon>
        <taxon>Enterobacterales</taxon>
        <taxon>Enterobacteriaceae</taxon>
        <taxon>Escherichia</taxon>
    </lineage>
</organism>
<dbReference type="EMBL" id="CP000948">
    <property type="protein sequence ID" value="ACB04731.1"/>
    <property type="molecule type" value="Genomic_DNA"/>
</dbReference>
<dbReference type="RefSeq" id="WP_001279752.1">
    <property type="nucleotide sequence ID" value="NC_010473.1"/>
</dbReference>
<dbReference type="SMR" id="B1X9B5"/>
<dbReference type="KEGG" id="ecd:ECDH10B_3871"/>
<dbReference type="HOGENOM" id="CLU_035023_3_1_6"/>
<dbReference type="GO" id="GO:0005886">
    <property type="term" value="C:plasma membrane"/>
    <property type="evidence" value="ECO:0007669"/>
    <property type="project" value="UniProtKB-SubCell"/>
</dbReference>
<dbReference type="GO" id="GO:0008324">
    <property type="term" value="F:monoatomic cation transmembrane transporter activity"/>
    <property type="evidence" value="ECO:0007669"/>
    <property type="project" value="InterPro"/>
</dbReference>
<dbReference type="GO" id="GO:0006813">
    <property type="term" value="P:potassium ion transport"/>
    <property type="evidence" value="ECO:0007669"/>
    <property type="project" value="InterPro"/>
</dbReference>
<dbReference type="FunFam" id="3.30.70.1450:FF:000004">
    <property type="entry name" value="Putative transport protein YidE"/>
    <property type="match status" value="1"/>
</dbReference>
<dbReference type="Gene3D" id="3.30.70.1450">
    <property type="entry name" value="Regulator of K+ conductance, C-terminal domain"/>
    <property type="match status" value="2"/>
</dbReference>
<dbReference type="HAMAP" id="MF_01016">
    <property type="entry name" value="YidE"/>
    <property type="match status" value="1"/>
</dbReference>
<dbReference type="InterPro" id="IPR050144">
    <property type="entry name" value="AAE_transporter"/>
</dbReference>
<dbReference type="InterPro" id="IPR006037">
    <property type="entry name" value="RCK_C"/>
</dbReference>
<dbReference type="InterPro" id="IPR036721">
    <property type="entry name" value="RCK_C_sf"/>
</dbReference>
<dbReference type="InterPro" id="IPR023018">
    <property type="entry name" value="Transpt_YidE_put"/>
</dbReference>
<dbReference type="InterPro" id="IPR006512">
    <property type="entry name" value="YidE_YbjL"/>
</dbReference>
<dbReference type="NCBIfam" id="NF003007">
    <property type="entry name" value="PRK03818.1"/>
    <property type="match status" value="1"/>
</dbReference>
<dbReference type="NCBIfam" id="TIGR01625">
    <property type="entry name" value="YidE_YbjL_dupl"/>
    <property type="match status" value="2"/>
</dbReference>
<dbReference type="PANTHER" id="PTHR30445">
    <property type="entry name" value="K(+)_H(+) ANTIPORTER SUBUNIT KHTT"/>
    <property type="match status" value="1"/>
</dbReference>
<dbReference type="PANTHER" id="PTHR30445:SF3">
    <property type="entry name" value="TRANSPORT PROTEIN YIDE-RELATED"/>
    <property type="match status" value="1"/>
</dbReference>
<dbReference type="Pfam" id="PF06826">
    <property type="entry name" value="Asp-Al_Ex"/>
    <property type="match status" value="2"/>
</dbReference>
<dbReference type="Pfam" id="PF02080">
    <property type="entry name" value="TrkA_C"/>
    <property type="match status" value="2"/>
</dbReference>
<dbReference type="SUPFAM" id="SSF116726">
    <property type="entry name" value="TrkA C-terminal domain-like"/>
    <property type="match status" value="2"/>
</dbReference>
<dbReference type="PROSITE" id="PS51202">
    <property type="entry name" value="RCK_C"/>
    <property type="match status" value="2"/>
</dbReference>
<keyword id="KW-1003">Cell membrane</keyword>
<keyword id="KW-0472">Membrane</keyword>
<keyword id="KW-0677">Repeat</keyword>
<keyword id="KW-0812">Transmembrane</keyword>
<keyword id="KW-1133">Transmembrane helix</keyword>
<keyword id="KW-0813">Transport</keyword>
<accession>B1X9B5</accession>
<name>YIDE_ECODH</name>
<feature type="chain" id="PRO_1000135207" description="Putative transport protein YidE">
    <location>
        <begin position="1"/>
        <end position="553"/>
    </location>
</feature>
<feature type="transmembrane region" description="Helical" evidence="1">
    <location>
        <begin position="4"/>
        <end position="24"/>
    </location>
</feature>
<feature type="transmembrane region" description="Helical" evidence="1">
    <location>
        <begin position="28"/>
        <end position="48"/>
    </location>
</feature>
<feature type="transmembrane region" description="Helical" evidence="1">
    <location>
        <begin position="65"/>
        <end position="85"/>
    </location>
</feature>
<feature type="transmembrane region" description="Helical" evidence="1">
    <location>
        <begin position="95"/>
        <end position="115"/>
    </location>
</feature>
<feature type="transmembrane region" description="Helical" evidence="1">
    <location>
        <begin position="158"/>
        <end position="178"/>
    </location>
</feature>
<feature type="transmembrane region" description="Helical" evidence="1">
    <location>
        <begin position="371"/>
        <end position="391"/>
    </location>
</feature>
<feature type="transmembrane region" description="Helical" evidence="1">
    <location>
        <begin position="393"/>
        <end position="413"/>
    </location>
</feature>
<feature type="transmembrane region" description="Helical" evidence="1">
    <location>
        <begin position="439"/>
        <end position="459"/>
    </location>
</feature>
<feature type="transmembrane region" description="Helical" evidence="1">
    <location>
        <begin position="464"/>
        <end position="484"/>
    </location>
</feature>
<feature type="transmembrane region" description="Helical" evidence="1">
    <location>
        <begin position="493"/>
        <end position="513"/>
    </location>
</feature>
<feature type="transmembrane region" description="Helical" evidence="1">
    <location>
        <begin position="533"/>
        <end position="553"/>
    </location>
</feature>
<feature type="domain" description="RCK C-terminal 1" evidence="1">
    <location>
        <begin position="191"/>
        <end position="276"/>
    </location>
</feature>
<feature type="domain" description="RCK C-terminal 2" evidence="1">
    <location>
        <begin position="279"/>
        <end position="361"/>
    </location>
</feature>
<sequence length="553" mass="58939">MSDIALTVSILALVAVVGLFIGNVKFRGIGLGIGGVLFGGIIVGHFVSQAGMTLSSDMLHVIQEFGLILFVYTIGIQVGPGFFASLRVSGLRLNLFAVLIVIIGGLVTAILHKLFDIPLPVVLGIFSGAVTNTPALGAGQQILRDLGTPMEMVDQMGMSYAMAYPFGICGILFTMWMLRVIFRVNVETEAQQHESSRTNGGALIKTINIRVENPNLHDLAIKDVPILNGDKIICSRLKREETLKVPSPDTIIQLGDLLHLVGQPADLHNAQLVIGQEVDTSLSTKGTDLRVERVVVTNENVLGKRIRDLHFKERYDVVISRLNRAGVELVASGDISLQFGDILNLVGRPSAIDAVANVLGNAQQKLQQVQMLPVFIGIGLGVLLGSIPVFVPGFPAALKLGLAGGPLIMALILGRIGSIGKLYWFMPPSANLALRELGIVLFLSVVGLKSGGDFVNTLVNGEGLSWIGYGALITAVPLITVGILARMLAKMNYLTMCGMLAGSMTDPPALAFANNLHPTSGAAALSYATVYPLVMFLRIITPQLLAVLFWSIG</sequence>
<reference key="1">
    <citation type="journal article" date="2008" name="J. Bacteriol.">
        <title>The complete genome sequence of Escherichia coli DH10B: insights into the biology of a laboratory workhorse.</title>
        <authorList>
            <person name="Durfee T."/>
            <person name="Nelson R."/>
            <person name="Baldwin S."/>
            <person name="Plunkett G. III"/>
            <person name="Burland V."/>
            <person name="Mau B."/>
            <person name="Petrosino J.F."/>
            <person name="Qin X."/>
            <person name="Muzny D.M."/>
            <person name="Ayele M."/>
            <person name="Gibbs R.A."/>
            <person name="Csorgo B."/>
            <person name="Posfai G."/>
            <person name="Weinstock G.M."/>
            <person name="Blattner F.R."/>
        </authorList>
    </citation>
    <scope>NUCLEOTIDE SEQUENCE [LARGE SCALE GENOMIC DNA]</scope>
    <source>
        <strain>K12 / DH10B</strain>
    </source>
</reference>